<evidence type="ECO:0000250" key="1"/>
<evidence type="ECO:0000255" key="2"/>
<evidence type="ECO:0000305" key="3"/>
<dbReference type="EMBL" id="AE005674">
    <property type="protein sequence ID" value="AAN43803.1"/>
    <property type="molecule type" value="Genomic_DNA"/>
</dbReference>
<dbReference type="EMBL" id="AE014073">
    <property type="protein sequence ID" value="AAP17620.1"/>
    <property type="molecule type" value="Genomic_DNA"/>
</dbReference>
<dbReference type="RefSeq" id="NP_708096.1">
    <property type="nucleotide sequence ID" value="NC_004337.2"/>
</dbReference>
<dbReference type="RefSeq" id="WP_000971732.1">
    <property type="nucleotide sequence ID" value="NZ_CP123365.1"/>
</dbReference>
<dbReference type="SMR" id="Q83QV3"/>
<dbReference type="STRING" id="198214.SF2284"/>
<dbReference type="PaxDb" id="198214-SF2284"/>
<dbReference type="GeneID" id="1025449"/>
<dbReference type="KEGG" id="sfl:SF2284"/>
<dbReference type="KEGG" id="sfx:S2414"/>
<dbReference type="PATRIC" id="fig|198214.7.peg.2735"/>
<dbReference type="HOGENOM" id="CLU_079069_1_0_6"/>
<dbReference type="Proteomes" id="UP000001006">
    <property type="component" value="Chromosome"/>
</dbReference>
<dbReference type="Proteomes" id="UP000002673">
    <property type="component" value="Chromosome"/>
</dbReference>
<dbReference type="GO" id="GO:0005886">
    <property type="term" value="C:plasma membrane"/>
    <property type="evidence" value="ECO:0007669"/>
    <property type="project" value="UniProtKB-SubCell"/>
</dbReference>
<dbReference type="GO" id="GO:0015232">
    <property type="term" value="F:heme transmembrane transporter activity"/>
    <property type="evidence" value="ECO:0007669"/>
    <property type="project" value="InterPro"/>
</dbReference>
<dbReference type="GO" id="GO:1903607">
    <property type="term" value="P:cytochrome c biosynthetic process"/>
    <property type="evidence" value="ECO:0007669"/>
    <property type="project" value="TreeGrafter"/>
</dbReference>
<dbReference type="GO" id="GO:0017004">
    <property type="term" value="P:cytochrome complex assembly"/>
    <property type="evidence" value="ECO:0007669"/>
    <property type="project" value="UniProtKB-KW"/>
</dbReference>
<dbReference type="InterPro" id="IPR003544">
    <property type="entry name" value="Cyt_c_biogenesis_CcmB"/>
</dbReference>
<dbReference type="InterPro" id="IPR026031">
    <property type="entry name" value="Cyt_c_CcmB_bac"/>
</dbReference>
<dbReference type="NCBIfam" id="TIGR01190">
    <property type="entry name" value="ccmB"/>
    <property type="match status" value="1"/>
</dbReference>
<dbReference type="PANTHER" id="PTHR30070:SF1">
    <property type="entry name" value="CYTOCHROME C BIOGENESIS B-RELATED"/>
    <property type="match status" value="1"/>
</dbReference>
<dbReference type="PANTHER" id="PTHR30070">
    <property type="entry name" value="HEME EXPORTER PROTEIN B"/>
    <property type="match status" value="1"/>
</dbReference>
<dbReference type="Pfam" id="PF03379">
    <property type="entry name" value="CcmB"/>
    <property type="match status" value="1"/>
</dbReference>
<dbReference type="PIRSF" id="PIRSF002764">
    <property type="entry name" value="CcmB"/>
    <property type="match status" value="1"/>
</dbReference>
<dbReference type="PRINTS" id="PR01414">
    <property type="entry name" value="CCMBBIOGNSIS"/>
</dbReference>
<proteinExistence type="inferred from homology"/>
<organism>
    <name type="scientific">Shigella flexneri</name>
    <dbReference type="NCBI Taxonomy" id="623"/>
    <lineage>
        <taxon>Bacteria</taxon>
        <taxon>Pseudomonadati</taxon>
        <taxon>Pseudomonadota</taxon>
        <taxon>Gammaproteobacteria</taxon>
        <taxon>Enterobacterales</taxon>
        <taxon>Enterobacteriaceae</taxon>
        <taxon>Shigella</taxon>
    </lineage>
</organism>
<sequence length="220" mass="23633">MMFWRIFRLELRVAFRHSAEIANPLWFFLIVITLFPLSIGPEPQLLARIAPGIIWVAALLSSLLALERLFRDDLQDGSLEQLMLLPLPLPAVVLAKVMAHWMVTGLPLLILSPLVAMLLGMDVYGWQVMALTLLLGTPTLGFLGAPGVALTVGLKRGGVLLSILVLPLTIPLLIFATAAMDAASMHLPVEGYLAILGALLAGTATLSPFATAAALRISIQ</sequence>
<protein>
    <recommendedName>
        <fullName>Heme exporter protein B</fullName>
    </recommendedName>
    <alternativeName>
        <fullName>Cytochrome c-type biogenesis protein CcmB</fullName>
    </alternativeName>
</protein>
<name>CCMB_SHIFL</name>
<gene>
    <name type="primary">ccmB</name>
    <name type="ordered locus">SF2284</name>
    <name type="ordered locus">S2414</name>
</gene>
<keyword id="KW-0997">Cell inner membrane</keyword>
<keyword id="KW-1003">Cell membrane</keyword>
<keyword id="KW-0201">Cytochrome c-type biogenesis</keyword>
<keyword id="KW-0472">Membrane</keyword>
<keyword id="KW-1185">Reference proteome</keyword>
<keyword id="KW-0812">Transmembrane</keyword>
<keyword id="KW-1133">Transmembrane helix</keyword>
<keyword id="KW-0813">Transport</keyword>
<accession>Q83QV3</accession>
<reference key="1">
    <citation type="journal article" date="2002" name="Nucleic Acids Res.">
        <title>Genome sequence of Shigella flexneri 2a: insights into pathogenicity through comparison with genomes of Escherichia coli K12 and O157.</title>
        <authorList>
            <person name="Jin Q."/>
            <person name="Yuan Z."/>
            <person name="Xu J."/>
            <person name="Wang Y."/>
            <person name="Shen Y."/>
            <person name="Lu W."/>
            <person name="Wang J."/>
            <person name="Liu H."/>
            <person name="Yang J."/>
            <person name="Yang F."/>
            <person name="Zhang X."/>
            <person name="Zhang J."/>
            <person name="Yang G."/>
            <person name="Wu H."/>
            <person name="Qu D."/>
            <person name="Dong J."/>
            <person name="Sun L."/>
            <person name="Xue Y."/>
            <person name="Zhao A."/>
            <person name="Gao Y."/>
            <person name="Zhu J."/>
            <person name="Kan B."/>
            <person name="Ding K."/>
            <person name="Chen S."/>
            <person name="Cheng H."/>
            <person name="Yao Z."/>
            <person name="He B."/>
            <person name="Chen R."/>
            <person name="Ma D."/>
            <person name="Qiang B."/>
            <person name="Wen Y."/>
            <person name="Hou Y."/>
            <person name="Yu J."/>
        </authorList>
    </citation>
    <scope>NUCLEOTIDE SEQUENCE [LARGE SCALE GENOMIC DNA]</scope>
    <source>
        <strain>301 / Serotype 2a</strain>
    </source>
</reference>
<reference key="2">
    <citation type="journal article" date="2003" name="Infect. Immun.">
        <title>Complete genome sequence and comparative genomics of Shigella flexneri serotype 2a strain 2457T.</title>
        <authorList>
            <person name="Wei J."/>
            <person name="Goldberg M.B."/>
            <person name="Burland V."/>
            <person name="Venkatesan M.M."/>
            <person name="Deng W."/>
            <person name="Fournier G."/>
            <person name="Mayhew G.F."/>
            <person name="Plunkett G. III"/>
            <person name="Rose D.J."/>
            <person name="Darling A."/>
            <person name="Mau B."/>
            <person name="Perna N.T."/>
            <person name="Payne S.M."/>
            <person name="Runyen-Janecky L.J."/>
            <person name="Zhou S."/>
            <person name="Schwartz D.C."/>
            <person name="Blattner F.R."/>
        </authorList>
    </citation>
    <scope>NUCLEOTIDE SEQUENCE [LARGE SCALE GENOMIC DNA]</scope>
    <source>
        <strain>ATCC 700930 / 2457T / Serotype 2a</strain>
    </source>
</reference>
<comment type="function">
    <text evidence="1">Required for the export of heme to the periplasm for the biogenesis of c-type cytochromes.</text>
</comment>
<comment type="subcellular location">
    <subcellularLocation>
        <location evidence="1">Cell inner membrane</location>
        <topology evidence="1">Multi-pass membrane protein</topology>
    </subcellularLocation>
</comment>
<comment type="similarity">
    <text evidence="3">Belongs to the CcmB/CycW/HelB family.</text>
</comment>
<feature type="chain" id="PRO_0000201543" description="Heme exporter protein B">
    <location>
        <begin position="1"/>
        <end position="220"/>
    </location>
</feature>
<feature type="topological domain" description="Cytoplasmic" evidence="2">
    <location>
        <begin position="1"/>
        <end position="20"/>
    </location>
</feature>
<feature type="transmembrane region" description="Helical" evidence="2">
    <location>
        <begin position="21"/>
        <end position="41"/>
    </location>
</feature>
<feature type="topological domain" description="Periplasmic" evidence="2">
    <location>
        <begin position="42"/>
        <end position="44"/>
    </location>
</feature>
<feature type="transmembrane region" description="Helical" evidence="2">
    <location>
        <begin position="45"/>
        <end position="65"/>
    </location>
</feature>
<feature type="topological domain" description="Cytoplasmic" evidence="2">
    <location>
        <begin position="66"/>
        <end position="100"/>
    </location>
</feature>
<feature type="transmembrane region" description="Helical" evidence="2">
    <location>
        <begin position="101"/>
        <end position="121"/>
    </location>
</feature>
<feature type="topological domain" description="Periplasmic" evidence="2">
    <location>
        <begin position="122"/>
        <end position="127"/>
    </location>
</feature>
<feature type="transmembrane region" description="Helical" evidence="2">
    <location>
        <begin position="128"/>
        <end position="148"/>
    </location>
</feature>
<feature type="topological domain" description="Cytoplasmic" evidence="2">
    <location>
        <begin position="149"/>
        <end position="158"/>
    </location>
</feature>
<feature type="transmembrane region" description="Helical" evidence="2">
    <location>
        <begin position="159"/>
        <end position="179"/>
    </location>
</feature>
<feature type="topological domain" description="Periplasmic" evidence="2">
    <location>
        <begin position="180"/>
        <end position="192"/>
    </location>
</feature>
<feature type="transmembrane region" description="Helical" evidence="2">
    <location>
        <begin position="193"/>
        <end position="213"/>
    </location>
</feature>
<feature type="topological domain" description="Cytoplasmic" evidence="2">
    <location>
        <begin position="214"/>
        <end position="220"/>
    </location>
</feature>
<feature type="sequence conflict" description="In Ref. 2; AAP17620." evidence="3" ref="2">
    <original>E</original>
    <variation>D</variation>
    <location>
        <position position="190"/>
    </location>
</feature>